<evidence type="ECO:0000255" key="1">
    <source>
        <dbReference type="HAMAP-Rule" id="MF_00418"/>
    </source>
</evidence>
<evidence type="ECO:0000305" key="2"/>
<organism>
    <name type="scientific">Neisseria gonorrhoeae (strain ATCC 700825 / FA 1090)</name>
    <dbReference type="NCBI Taxonomy" id="242231"/>
    <lineage>
        <taxon>Bacteria</taxon>
        <taxon>Pseudomonadati</taxon>
        <taxon>Pseudomonadota</taxon>
        <taxon>Betaproteobacteria</taxon>
        <taxon>Neisseriales</taxon>
        <taxon>Neisseriaceae</taxon>
        <taxon>Neisseria</taxon>
    </lineage>
</organism>
<reference key="1">
    <citation type="submission" date="2003-03" db="EMBL/GenBank/DDBJ databases">
        <title>The complete genome sequence of Neisseria gonorrhoeae.</title>
        <authorList>
            <person name="Lewis L.A."/>
            <person name="Gillaspy A.F."/>
            <person name="McLaughlin R.E."/>
            <person name="Gipson M."/>
            <person name="Ducey T.F."/>
            <person name="Ownbey T."/>
            <person name="Hartman K."/>
            <person name="Nydick C."/>
            <person name="Carson M.B."/>
            <person name="Vaughn J."/>
            <person name="Thomson C."/>
            <person name="Song L."/>
            <person name="Lin S."/>
            <person name="Yuan X."/>
            <person name="Najar F."/>
            <person name="Zhan M."/>
            <person name="Ren Q."/>
            <person name="Zhu H."/>
            <person name="Qi S."/>
            <person name="Kenton S.M."/>
            <person name="Lai H."/>
            <person name="White J.D."/>
            <person name="Clifton S."/>
            <person name="Roe B.A."/>
            <person name="Dyer D.W."/>
        </authorList>
    </citation>
    <scope>NUCLEOTIDE SEQUENCE [LARGE SCALE GENOMIC DNA]</scope>
    <source>
        <strain>ATCC 700825 / FA 1090</strain>
    </source>
</reference>
<sequence length="291" mass="30751">MLQGSLVALITPMNQDGSIHYDQLRQLIDWHIENGTDGIVAAGTTGESATLSVEEHLSVIEETVKHVAKRVPVIAGTGANNTVEAIALSQAAEKAGADYTLSVVPYYNKPSQEGMYRHFKAVAEAAAIPMILYNVPGRTVVSMNNETILRLAEIPNIVGVKEASGNVGSNIELINRAPEGFAVLSGDDHTALPFMLCGGHGVITVAANAAPKLFADMCRAALQGDIALARELNDRLIPIYDTMFCEPSPAAPKWAVSALGRCGPHVRLPLVPLTEGGQAKVRAALKASGQL</sequence>
<accession>Q5F849</accession>
<feature type="chain" id="PRO_0000103129" description="4-hydroxy-tetrahydrodipicolinate synthase">
    <location>
        <begin position="1"/>
        <end position="291"/>
    </location>
</feature>
<feature type="active site" description="Proton donor/acceptor" evidence="1">
    <location>
        <position position="133"/>
    </location>
</feature>
<feature type="active site" description="Schiff-base intermediate with substrate" evidence="1">
    <location>
        <position position="161"/>
    </location>
</feature>
<feature type="binding site" evidence="1">
    <location>
        <position position="45"/>
    </location>
    <ligand>
        <name>pyruvate</name>
        <dbReference type="ChEBI" id="CHEBI:15361"/>
    </ligand>
</feature>
<feature type="binding site" evidence="1">
    <location>
        <position position="203"/>
    </location>
    <ligand>
        <name>pyruvate</name>
        <dbReference type="ChEBI" id="CHEBI:15361"/>
    </ligand>
</feature>
<feature type="site" description="Part of a proton relay during catalysis" evidence="1">
    <location>
        <position position="44"/>
    </location>
</feature>
<feature type="site" description="Part of a proton relay during catalysis" evidence="1">
    <location>
        <position position="107"/>
    </location>
</feature>
<protein>
    <recommendedName>
        <fullName evidence="1">4-hydroxy-tetrahydrodipicolinate synthase</fullName>
        <shortName evidence="1">HTPA synthase</shortName>
        <ecNumber evidence="1">4.3.3.7</ecNumber>
    </recommendedName>
</protein>
<gene>
    <name evidence="1" type="primary">dapA</name>
    <name type="ordered locus">NGO_0947</name>
</gene>
<dbReference type="EC" id="4.3.3.7" evidence="1"/>
<dbReference type="EMBL" id="AE004969">
    <property type="protein sequence ID" value="AAW89638.1"/>
    <property type="molecule type" value="Genomic_DNA"/>
</dbReference>
<dbReference type="RefSeq" id="WP_003706330.1">
    <property type="nucleotide sequence ID" value="NC_002946.2"/>
</dbReference>
<dbReference type="RefSeq" id="YP_208050.1">
    <property type="nucleotide sequence ID" value="NC_002946.2"/>
</dbReference>
<dbReference type="SMR" id="Q5F849"/>
<dbReference type="STRING" id="242231.NGO_0947"/>
<dbReference type="KEGG" id="ngo:NGO_0947"/>
<dbReference type="PATRIC" id="fig|242231.10.peg.1108"/>
<dbReference type="HOGENOM" id="CLU_049343_7_1_4"/>
<dbReference type="UniPathway" id="UPA00034">
    <property type="reaction ID" value="UER00017"/>
</dbReference>
<dbReference type="Proteomes" id="UP000000535">
    <property type="component" value="Chromosome"/>
</dbReference>
<dbReference type="GO" id="GO:0005829">
    <property type="term" value="C:cytosol"/>
    <property type="evidence" value="ECO:0007669"/>
    <property type="project" value="TreeGrafter"/>
</dbReference>
<dbReference type="GO" id="GO:0008840">
    <property type="term" value="F:4-hydroxy-tetrahydrodipicolinate synthase activity"/>
    <property type="evidence" value="ECO:0007669"/>
    <property type="project" value="UniProtKB-UniRule"/>
</dbReference>
<dbReference type="GO" id="GO:0019877">
    <property type="term" value="P:diaminopimelate biosynthetic process"/>
    <property type="evidence" value="ECO:0007669"/>
    <property type="project" value="UniProtKB-UniRule"/>
</dbReference>
<dbReference type="GO" id="GO:0009089">
    <property type="term" value="P:lysine biosynthetic process via diaminopimelate"/>
    <property type="evidence" value="ECO:0007669"/>
    <property type="project" value="UniProtKB-UniRule"/>
</dbReference>
<dbReference type="CDD" id="cd00950">
    <property type="entry name" value="DHDPS"/>
    <property type="match status" value="1"/>
</dbReference>
<dbReference type="Gene3D" id="3.20.20.70">
    <property type="entry name" value="Aldolase class I"/>
    <property type="match status" value="1"/>
</dbReference>
<dbReference type="HAMAP" id="MF_00418">
    <property type="entry name" value="DapA"/>
    <property type="match status" value="1"/>
</dbReference>
<dbReference type="InterPro" id="IPR013785">
    <property type="entry name" value="Aldolase_TIM"/>
</dbReference>
<dbReference type="InterPro" id="IPR005263">
    <property type="entry name" value="DapA"/>
</dbReference>
<dbReference type="InterPro" id="IPR002220">
    <property type="entry name" value="DapA-like"/>
</dbReference>
<dbReference type="InterPro" id="IPR020625">
    <property type="entry name" value="Schiff_base-form_aldolases_AS"/>
</dbReference>
<dbReference type="InterPro" id="IPR020624">
    <property type="entry name" value="Schiff_base-form_aldolases_CS"/>
</dbReference>
<dbReference type="NCBIfam" id="TIGR00674">
    <property type="entry name" value="dapA"/>
    <property type="match status" value="1"/>
</dbReference>
<dbReference type="PANTHER" id="PTHR12128:SF66">
    <property type="entry name" value="4-HYDROXY-2-OXOGLUTARATE ALDOLASE, MITOCHONDRIAL"/>
    <property type="match status" value="1"/>
</dbReference>
<dbReference type="PANTHER" id="PTHR12128">
    <property type="entry name" value="DIHYDRODIPICOLINATE SYNTHASE"/>
    <property type="match status" value="1"/>
</dbReference>
<dbReference type="Pfam" id="PF00701">
    <property type="entry name" value="DHDPS"/>
    <property type="match status" value="1"/>
</dbReference>
<dbReference type="PIRSF" id="PIRSF001365">
    <property type="entry name" value="DHDPS"/>
    <property type="match status" value="1"/>
</dbReference>
<dbReference type="PRINTS" id="PR00146">
    <property type="entry name" value="DHPICSNTHASE"/>
</dbReference>
<dbReference type="SMART" id="SM01130">
    <property type="entry name" value="DHDPS"/>
    <property type="match status" value="1"/>
</dbReference>
<dbReference type="SUPFAM" id="SSF51569">
    <property type="entry name" value="Aldolase"/>
    <property type="match status" value="1"/>
</dbReference>
<dbReference type="PROSITE" id="PS00665">
    <property type="entry name" value="DHDPS_1"/>
    <property type="match status" value="1"/>
</dbReference>
<dbReference type="PROSITE" id="PS00666">
    <property type="entry name" value="DHDPS_2"/>
    <property type="match status" value="1"/>
</dbReference>
<proteinExistence type="inferred from homology"/>
<comment type="function">
    <text evidence="1">Catalyzes the condensation of (S)-aspartate-beta-semialdehyde [(S)-ASA] and pyruvate to 4-hydroxy-tetrahydrodipicolinate (HTPA).</text>
</comment>
<comment type="catalytic activity">
    <reaction evidence="1">
        <text>L-aspartate 4-semialdehyde + pyruvate = (2S,4S)-4-hydroxy-2,3,4,5-tetrahydrodipicolinate + H2O + H(+)</text>
        <dbReference type="Rhea" id="RHEA:34171"/>
        <dbReference type="ChEBI" id="CHEBI:15361"/>
        <dbReference type="ChEBI" id="CHEBI:15377"/>
        <dbReference type="ChEBI" id="CHEBI:15378"/>
        <dbReference type="ChEBI" id="CHEBI:67139"/>
        <dbReference type="ChEBI" id="CHEBI:537519"/>
        <dbReference type="EC" id="4.3.3.7"/>
    </reaction>
</comment>
<comment type="pathway">
    <text evidence="1">Amino-acid biosynthesis; L-lysine biosynthesis via DAP pathway; (S)-tetrahydrodipicolinate from L-aspartate: step 3/4.</text>
</comment>
<comment type="subunit">
    <text evidence="1">Homotetramer; dimer of dimers.</text>
</comment>
<comment type="subcellular location">
    <subcellularLocation>
        <location evidence="1">Cytoplasm</location>
    </subcellularLocation>
</comment>
<comment type="similarity">
    <text evidence="1">Belongs to the DapA family.</text>
</comment>
<comment type="caution">
    <text evidence="2">Was originally thought to be a dihydrodipicolinate synthase (DHDPS), catalyzing the condensation of (S)-aspartate-beta-semialdehyde [(S)-ASA] and pyruvate to dihydrodipicolinate (DHDP). However, it was shown in E.coli that the product of the enzymatic reaction is not dihydrodipicolinate but in fact (4S)-4-hydroxy-2,3,4,5-tetrahydro-(2S)-dipicolinic acid (HTPA), and that the consecutive dehydration reaction leading to DHDP is not spontaneous but catalyzed by DapB.</text>
</comment>
<keyword id="KW-0028">Amino-acid biosynthesis</keyword>
<keyword id="KW-0963">Cytoplasm</keyword>
<keyword id="KW-0220">Diaminopimelate biosynthesis</keyword>
<keyword id="KW-0456">Lyase</keyword>
<keyword id="KW-0457">Lysine biosynthesis</keyword>
<keyword id="KW-1185">Reference proteome</keyword>
<keyword id="KW-0704">Schiff base</keyword>
<name>DAPA_NEIG1</name>